<reference key="1">
    <citation type="journal article" date="2003" name="Proc. Natl. Acad. Sci. U.S.A.">
        <title>Reductive genome evolution in Buchnera aphidicola.</title>
        <authorList>
            <person name="van Ham R.C.H.J."/>
            <person name="Kamerbeek J."/>
            <person name="Palacios C."/>
            <person name="Rausell C."/>
            <person name="Abascal F."/>
            <person name="Bastolla U."/>
            <person name="Fernandez J.M."/>
            <person name="Jimenez L."/>
            <person name="Postigo M."/>
            <person name="Silva F.J."/>
            <person name="Tamames J."/>
            <person name="Viguera E."/>
            <person name="Latorre A."/>
            <person name="Valencia A."/>
            <person name="Moran F."/>
            <person name="Moya A."/>
        </authorList>
    </citation>
    <scope>NUCLEOTIDE SEQUENCE [LARGE SCALE GENOMIC DNA]</scope>
    <source>
        <strain>Bp</strain>
    </source>
</reference>
<accession>Q89A73</accession>
<sequence length="136" mass="15375">MLQPKNTKFRKMHKGKNRGLAIGTNVHFGLYGLKAITRGRLKSSQIESARRAITRAIKRQGKIWIRIFPDKPITKKPLEVRMGKGKGNVEYWVALVQPGKILYEISGVSEELSRIAFKLAAAKLPVKTMFVTKLVM</sequence>
<evidence type="ECO:0000255" key="1">
    <source>
        <dbReference type="HAMAP-Rule" id="MF_01342"/>
    </source>
</evidence>
<evidence type="ECO:0000305" key="2"/>
<protein>
    <recommendedName>
        <fullName evidence="1">Large ribosomal subunit protein uL16</fullName>
    </recommendedName>
    <alternativeName>
        <fullName evidence="2">50S ribosomal protein L16</fullName>
    </alternativeName>
</protein>
<organism>
    <name type="scientific">Buchnera aphidicola subsp. Baizongia pistaciae (strain Bp)</name>
    <dbReference type="NCBI Taxonomy" id="224915"/>
    <lineage>
        <taxon>Bacteria</taxon>
        <taxon>Pseudomonadati</taxon>
        <taxon>Pseudomonadota</taxon>
        <taxon>Gammaproteobacteria</taxon>
        <taxon>Enterobacterales</taxon>
        <taxon>Erwiniaceae</taxon>
        <taxon>Buchnera</taxon>
    </lineage>
</organism>
<comment type="function">
    <text evidence="1">Binds 23S rRNA and is also seen to make contacts with the A and possibly P site tRNAs.</text>
</comment>
<comment type="subunit">
    <text evidence="1">Part of the 50S ribosomal subunit.</text>
</comment>
<comment type="similarity">
    <text evidence="1">Belongs to the universal ribosomal protein uL16 family.</text>
</comment>
<proteinExistence type="inferred from homology"/>
<gene>
    <name evidence="1" type="primary">rplP</name>
    <name type="ordered locus">bbp_460</name>
</gene>
<name>RL16_BUCBP</name>
<dbReference type="EMBL" id="AE016826">
    <property type="protein sequence ID" value="AAO27166.1"/>
    <property type="molecule type" value="Genomic_DNA"/>
</dbReference>
<dbReference type="RefSeq" id="WP_011091567.1">
    <property type="nucleotide sequence ID" value="NC_004545.1"/>
</dbReference>
<dbReference type="SMR" id="Q89A73"/>
<dbReference type="STRING" id="224915.bbp_460"/>
<dbReference type="KEGG" id="bab:bbp_460"/>
<dbReference type="eggNOG" id="COG0197">
    <property type="taxonomic scope" value="Bacteria"/>
</dbReference>
<dbReference type="HOGENOM" id="CLU_078858_2_1_6"/>
<dbReference type="OrthoDB" id="9802589at2"/>
<dbReference type="Proteomes" id="UP000000601">
    <property type="component" value="Chromosome"/>
</dbReference>
<dbReference type="GO" id="GO:0022625">
    <property type="term" value="C:cytosolic large ribosomal subunit"/>
    <property type="evidence" value="ECO:0007669"/>
    <property type="project" value="TreeGrafter"/>
</dbReference>
<dbReference type="GO" id="GO:0019843">
    <property type="term" value="F:rRNA binding"/>
    <property type="evidence" value="ECO:0007669"/>
    <property type="project" value="UniProtKB-UniRule"/>
</dbReference>
<dbReference type="GO" id="GO:0003735">
    <property type="term" value="F:structural constituent of ribosome"/>
    <property type="evidence" value="ECO:0007669"/>
    <property type="project" value="InterPro"/>
</dbReference>
<dbReference type="GO" id="GO:0000049">
    <property type="term" value="F:tRNA binding"/>
    <property type="evidence" value="ECO:0007669"/>
    <property type="project" value="UniProtKB-KW"/>
</dbReference>
<dbReference type="GO" id="GO:0006412">
    <property type="term" value="P:translation"/>
    <property type="evidence" value="ECO:0007669"/>
    <property type="project" value="UniProtKB-UniRule"/>
</dbReference>
<dbReference type="CDD" id="cd01433">
    <property type="entry name" value="Ribosomal_L16_L10e"/>
    <property type="match status" value="1"/>
</dbReference>
<dbReference type="FunFam" id="3.90.1170.10:FF:000001">
    <property type="entry name" value="50S ribosomal protein L16"/>
    <property type="match status" value="1"/>
</dbReference>
<dbReference type="Gene3D" id="3.90.1170.10">
    <property type="entry name" value="Ribosomal protein L10e/L16"/>
    <property type="match status" value="1"/>
</dbReference>
<dbReference type="HAMAP" id="MF_01342">
    <property type="entry name" value="Ribosomal_uL16"/>
    <property type="match status" value="1"/>
</dbReference>
<dbReference type="InterPro" id="IPR047873">
    <property type="entry name" value="Ribosomal_uL16"/>
</dbReference>
<dbReference type="InterPro" id="IPR000114">
    <property type="entry name" value="Ribosomal_uL16_bact-type"/>
</dbReference>
<dbReference type="InterPro" id="IPR020798">
    <property type="entry name" value="Ribosomal_uL16_CS"/>
</dbReference>
<dbReference type="InterPro" id="IPR016180">
    <property type="entry name" value="Ribosomal_uL16_dom"/>
</dbReference>
<dbReference type="InterPro" id="IPR036920">
    <property type="entry name" value="Ribosomal_uL16_sf"/>
</dbReference>
<dbReference type="NCBIfam" id="TIGR01164">
    <property type="entry name" value="rplP_bact"/>
    <property type="match status" value="1"/>
</dbReference>
<dbReference type="PANTHER" id="PTHR12220">
    <property type="entry name" value="50S/60S RIBOSOMAL PROTEIN L16"/>
    <property type="match status" value="1"/>
</dbReference>
<dbReference type="PANTHER" id="PTHR12220:SF13">
    <property type="entry name" value="LARGE RIBOSOMAL SUBUNIT PROTEIN UL16M"/>
    <property type="match status" value="1"/>
</dbReference>
<dbReference type="Pfam" id="PF00252">
    <property type="entry name" value="Ribosomal_L16"/>
    <property type="match status" value="1"/>
</dbReference>
<dbReference type="PRINTS" id="PR00060">
    <property type="entry name" value="RIBOSOMALL16"/>
</dbReference>
<dbReference type="SUPFAM" id="SSF54686">
    <property type="entry name" value="Ribosomal protein L16p/L10e"/>
    <property type="match status" value="1"/>
</dbReference>
<dbReference type="PROSITE" id="PS00586">
    <property type="entry name" value="RIBOSOMAL_L16_1"/>
    <property type="match status" value="1"/>
</dbReference>
<dbReference type="PROSITE" id="PS00701">
    <property type="entry name" value="RIBOSOMAL_L16_2"/>
    <property type="match status" value="1"/>
</dbReference>
<keyword id="KW-1185">Reference proteome</keyword>
<keyword id="KW-0687">Ribonucleoprotein</keyword>
<keyword id="KW-0689">Ribosomal protein</keyword>
<keyword id="KW-0694">RNA-binding</keyword>
<keyword id="KW-0699">rRNA-binding</keyword>
<keyword id="KW-0820">tRNA-binding</keyword>
<feature type="chain" id="PRO_0000062066" description="Large ribosomal subunit protein uL16">
    <location>
        <begin position="1"/>
        <end position="136"/>
    </location>
</feature>